<sequence length="614" mass="69356">MFYFLGWFVMGIKGVGGSGHSDYPIPSHNGDGESEKNSSDSTSSKVNAKVTSSLQGAPSTNDENSVSPYSVVDVTDLIESGESSRHVIKKSIETEEAAHRESSVEGAGHSSRGIFGRLQAGLGRLARRVGEAVRNTVGSIFPQRAGAEQRTGKARTKYSPSASRGLRLMFTDFWRYRVLHRNPPMDGLFAKLDADEAEDMAAYTKEYVSNLEKRGAADRETIEHCQMVAKNWEKRARDLRDMGAAKKFLRDPFGKSDPKYKGTLPGEYTVGNTMFYDGPGVSKLSEVDTGFWLDMEKLSDAVLSANIQKGLRARFVLNQSIPQLESLEERFRKLESACDEARASLKEAGWIKEGKEPNKAQRAFRRFVEESRNLELSFGSFGESARRLSARVSQGLAAAGEAIRRCFDCRKGKYSLKKDLSSEELNLAEELIRFTDEMGIERDPDGNYNIPWVENWRTGVPVIEGEGAEHIYETMMPVQESFEQVYEVMDMGLEERRDFAVSQQHYQVPPRSSLNYETPRFREYDVPRNSARSYYDVPRVPPQNEVEEMHVTKGMRSSVYACFVAGMRNYIVSQPQEQIPNSEQVEQLFQELINDGDQIIQELMKIWNEELDNQ</sequence>
<reference key="1">
    <citation type="journal article" date="2000" name="Nucleic Acids Res.">
        <title>Genome sequences of Chlamydia trachomatis MoPn and Chlamydia pneumoniae AR39.</title>
        <authorList>
            <person name="Read T.D."/>
            <person name="Brunham R.C."/>
            <person name="Shen C."/>
            <person name="Gill S.R."/>
            <person name="Heidelberg J.F."/>
            <person name="White O."/>
            <person name="Hickey E.K."/>
            <person name="Peterson J.D."/>
            <person name="Utterback T.R."/>
            <person name="Berry K.J."/>
            <person name="Bass S."/>
            <person name="Linher K.D."/>
            <person name="Weidman J.F."/>
            <person name="Khouri H.M."/>
            <person name="Craven B."/>
            <person name="Bowman C."/>
            <person name="Dodson R.J."/>
            <person name="Gwinn M.L."/>
            <person name="Nelson W.C."/>
            <person name="DeBoy R.T."/>
            <person name="Kolonay J.F."/>
            <person name="McClarty G."/>
            <person name="Salzberg S.L."/>
            <person name="Eisen J.A."/>
            <person name="Fraser C.M."/>
        </authorList>
    </citation>
    <scope>NUCLEOTIDE SEQUENCE [LARGE SCALE GENOMIC DNA]</scope>
    <source>
        <strain>MoPn / Nigg</strain>
    </source>
</reference>
<protein>
    <recommendedName>
        <fullName>Uncharacterized protein TC_0268</fullName>
    </recommendedName>
</protein>
<gene>
    <name type="ordered locus">TC_0268</name>
</gene>
<evidence type="ECO:0000256" key="1">
    <source>
        <dbReference type="SAM" id="MobiDB-lite"/>
    </source>
</evidence>
<evidence type="ECO:0000305" key="2"/>
<organism>
    <name type="scientific">Chlamydia muridarum (strain MoPn / Nigg)</name>
    <dbReference type="NCBI Taxonomy" id="243161"/>
    <lineage>
        <taxon>Bacteria</taxon>
        <taxon>Pseudomonadati</taxon>
        <taxon>Chlamydiota</taxon>
        <taxon>Chlamydiia</taxon>
        <taxon>Chlamydiales</taxon>
        <taxon>Chlamydiaceae</taxon>
        <taxon>Chlamydia/Chlamydophila group</taxon>
        <taxon>Chlamydia</taxon>
    </lineage>
</organism>
<proteinExistence type="predicted"/>
<name>Y268_CHLMU</name>
<feature type="chain" id="PRO_0000218348" description="Uncharacterized protein TC_0268">
    <location>
        <begin position="1"/>
        <end position="614"/>
    </location>
</feature>
<feature type="region of interest" description="Disordered" evidence="1">
    <location>
        <begin position="23"/>
        <end position="68"/>
    </location>
</feature>
<feature type="compositionally biased region" description="Polar residues" evidence="1">
    <location>
        <begin position="49"/>
        <end position="68"/>
    </location>
</feature>
<dbReference type="EMBL" id="AE002160">
    <property type="protein sequence ID" value="AAF39137.1"/>
    <property type="molecule type" value="Genomic_DNA"/>
</dbReference>
<dbReference type="PIR" id="G81721">
    <property type="entry name" value="G81721"/>
</dbReference>
<dbReference type="KEGG" id="cmu:TC_0268"/>
<dbReference type="HOGENOM" id="CLU_462096_0_0_0"/>
<dbReference type="Proteomes" id="UP000000800">
    <property type="component" value="Chromosome"/>
</dbReference>
<comment type="similarity">
    <text evidence="2">To C.trachomatis CT875.</text>
</comment>
<accession>Q9PL40</accession>